<name>GLMU_STRPI</name>
<keyword id="KW-0012">Acyltransferase</keyword>
<keyword id="KW-0133">Cell shape</keyword>
<keyword id="KW-0961">Cell wall biogenesis/degradation</keyword>
<keyword id="KW-0963">Cytoplasm</keyword>
<keyword id="KW-0460">Magnesium</keyword>
<keyword id="KW-0479">Metal-binding</keyword>
<keyword id="KW-0511">Multifunctional enzyme</keyword>
<keyword id="KW-0548">Nucleotidyltransferase</keyword>
<keyword id="KW-0573">Peptidoglycan synthesis</keyword>
<keyword id="KW-0677">Repeat</keyword>
<keyword id="KW-0808">Transferase</keyword>
<dbReference type="EC" id="2.7.7.23" evidence="1"/>
<dbReference type="EC" id="2.3.1.157" evidence="1"/>
<dbReference type="EMBL" id="CP000936">
    <property type="protein sequence ID" value="ACA36832.1"/>
    <property type="molecule type" value="Genomic_DNA"/>
</dbReference>
<dbReference type="RefSeq" id="WP_000064404.1">
    <property type="nucleotide sequence ID" value="NC_010380.1"/>
</dbReference>
<dbReference type="SMR" id="B1IBE8"/>
<dbReference type="KEGG" id="spv:SPH_1089"/>
<dbReference type="HOGENOM" id="CLU_029499_15_2_9"/>
<dbReference type="UniPathway" id="UPA00113">
    <property type="reaction ID" value="UER00532"/>
</dbReference>
<dbReference type="UniPathway" id="UPA00113">
    <property type="reaction ID" value="UER00533"/>
</dbReference>
<dbReference type="UniPathway" id="UPA00973"/>
<dbReference type="Proteomes" id="UP000002163">
    <property type="component" value="Chromosome"/>
</dbReference>
<dbReference type="GO" id="GO:0005737">
    <property type="term" value="C:cytoplasm"/>
    <property type="evidence" value="ECO:0007669"/>
    <property type="project" value="UniProtKB-SubCell"/>
</dbReference>
<dbReference type="GO" id="GO:0016020">
    <property type="term" value="C:membrane"/>
    <property type="evidence" value="ECO:0007669"/>
    <property type="project" value="GOC"/>
</dbReference>
<dbReference type="GO" id="GO:0019134">
    <property type="term" value="F:glucosamine-1-phosphate N-acetyltransferase activity"/>
    <property type="evidence" value="ECO:0007669"/>
    <property type="project" value="UniProtKB-UniRule"/>
</dbReference>
<dbReference type="GO" id="GO:0000287">
    <property type="term" value="F:magnesium ion binding"/>
    <property type="evidence" value="ECO:0007669"/>
    <property type="project" value="UniProtKB-UniRule"/>
</dbReference>
<dbReference type="GO" id="GO:0003977">
    <property type="term" value="F:UDP-N-acetylglucosamine diphosphorylase activity"/>
    <property type="evidence" value="ECO:0007669"/>
    <property type="project" value="UniProtKB-UniRule"/>
</dbReference>
<dbReference type="GO" id="GO:0000902">
    <property type="term" value="P:cell morphogenesis"/>
    <property type="evidence" value="ECO:0007669"/>
    <property type="project" value="UniProtKB-UniRule"/>
</dbReference>
<dbReference type="GO" id="GO:0071555">
    <property type="term" value="P:cell wall organization"/>
    <property type="evidence" value="ECO:0007669"/>
    <property type="project" value="UniProtKB-KW"/>
</dbReference>
<dbReference type="GO" id="GO:0009245">
    <property type="term" value="P:lipid A biosynthetic process"/>
    <property type="evidence" value="ECO:0007669"/>
    <property type="project" value="UniProtKB-UniRule"/>
</dbReference>
<dbReference type="GO" id="GO:0009252">
    <property type="term" value="P:peptidoglycan biosynthetic process"/>
    <property type="evidence" value="ECO:0007669"/>
    <property type="project" value="UniProtKB-UniRule"/>
</dbReference>
<dbReference type="GO" id="GO:0008360">
    <property type="term" value="P:regulation of cell shape"/>
    <property type="evidence" value="ECO:0007669"/>
    <property type="project" value="UniProtKB-KW"/>
</dbReference>
<dbReference type="GO" id="GO:0006048">
    <property type="term" value="P:UDP-N-acetylglucosamine biosynthetic process"/>
    <property type="evidence" value="ECO:0007669"/>
    <property type="project" value="UniProtKB-UniPathway"/>
</dbReference>
<dbReference type="CDD" id="cd02540">
    <property type="entry name" value="GT2_GlmU_N_bac"/>
    <property type="match status" value="1"/>
</dbReference>
<dbReference type="CDD" id="cd03353">
    <property type="entry name" value="LbH_GlmU_C"/>
    <property type="match status" value="1"/>
</dbReference>
<dbReference type="Gene3D" id="2.160.10.10">
    <property type="entry name" value="Hexapeptide repeat proteins"/>
    <property type="match status" value="1"/>
</dbReference>
<dbReference type="Gene3D" id="3.90.550.10">
    <property type="entry name" value="Spore Coat Polysaccharide Biosynthesis Protein SpsA, Chain A"/>
    <property type="match status" value="1"/>
</dbReference>
<dbReference type="HAMAP" id="MF_01631">
    <property type="entry name" value="GlmU"/>
    <property type="match status" value="1"/>
</dbReference>
<dbReference type="InterPro" id="IPR005882">
    <property type="entry name" value="Bifunctional_GlmU"/>
</dbReference>
<dbReference type="InterPro" id="IPR050065">
    <property type="entry name" value="GlmU-like"/>
</dbReference>
<dbReference type="InterPro" id="IPR038009">
    <property type="entry name" value="GlmU_C_LbH"/>
</dbReference>
<dbReference type="InterPro" id="IPR001451">
    <property type="entry name" value="Hexapep"/>
</dbReference>
<dbReference type="InterPro" id="IPR018357">
    <property type="entry name" value="Hexapep_transf_CS"/>
</dbReference>
<dbReference type="InterPro" id="IPR005835">
    <property type="entry name" value="NTP_transferase_dom"/>
</dbReference>
<dbReference type="InterPro" id="IPR029044">
    <property type="entry name" value="Nucleotide-diphossugar_trans"/>
</dbReference>
<dbReference type="InterPro" id="IPR011004">
    <property type="entry name" value="Trimer_LpxA-like_sf"/>
</dbReference>
<dbReference type="NCBIfam" id="TIGR01173">
    <property type="entry name" value="glmU"/>
    <property type="match status" value="1"/>
</dbReference>
<dbReference type="NCBIfam" id="NF010934">
    <property type="entry name" value="PRK14354.1"/>
    <property type="match status" value="1"/>
</dbReference>
<dbReference type="PANTHER" id="PTHR43584:SF3">
    <property type="entry name" value="BIFUNCTIONAL PROTEIN GLMU"/>
    <property type="match status" value="1"/>
</dbReference>
<dbReference type="PANTHER" id="PTHR43584">
    <property type="entry name" value="NUCLEOTIDYL TRANSFERASE"/>
    <property type="match status" value="1"/>
</dbReference>
<dbReference type="Pfam" id="PF14602">
    <property type="entry name" value="Hexapep_2"/>
    <property type="match status" value="1"/>
</dbReference>
<dbReference type="Pfam" id="PF00483">
    <property type="entry name" value="NTP_transferase"/>
    <property type="match status" value="1"/>
</dbReference>
<dbReference type="SUPFAM" id="SSF53448">
    <property type="entry name" value="Nucleotide-diphospho-sugar transferases"/>
    <property type="match status" value="1"/>
</dbReference>
<dbReference type="SUPFAM" id="SSF51161">
    <property type="entry name" value="Trimeric LpxA-like enzymes"/>
    <property type="match status" value="1"/>
</dbReference>
<dbReference type="PROSITE" id="PS00101">
    <property type="entry name" value="HEXAPEP_TRANSFERASES"/>
    <property type="match status" value="1"/>
</dbReference>
<sequence length="459" mass="49344">MSNFAIILAAGKGTRMKSDLPKVLHKVAGISMLEHVFRSVGAIQPEKTVTVVGHKAELVEEVLAGQTEFVTQSEQLGTGHAVMMTEPILEGLSGHTLVIAGDTPLITGESLKNLIDFHINHKNVATILTAETDNPFGYGRIVRNDNAEVLRIVEQKDATDFEKQIKEINTGTYVFDNERLFEALKNINTNNAQGEYYITDVIGIFRETGEKVGAYTLKDFDESLGVNDRVALATAESVMRRRINHKHMVNGVSFVNPEATYIDIDVEIAPEVQIEANVTLKGQTKIGAETVLTNGTYVVDSTIGAGAVITNSMIEESSVADGVTVGPYAHIRPNSSLGAQVHIGNFVEVKGSSIGENTKAGHLTYIGNCEVGSNVNFGAGTITVNYDGKNKYKTVIGDNVFVGSNSTIIAPVELGDNSLVGAGSTITKDVPADAIAIGRGRQINKDEYATRLPHHPKNQ</sequence>
<gene>
    <name evidence="1" type="primary">glmU</name>
    <name type="ordered locus">SPH_1089</name>
</gene>
<accession>B1IBE8</accession>
<reference key="1">
    <citation type="journal article" date="2010" name="Genome Biol.">
        <title>Structure and dynamics of the pan-genome of Streptococcus pneumoniae and closely related species.</title>
        <authorList>
            <person name="Donati C."/>
            <person name="Hiller N.L."/>
            <person name="Tettelin H."/>
            <person name="Muzzi A."/>
            <person name="Croucher N.J."/>
            <person name="Angiuoli S.V."/>
            <person name="Oggioni M."/>
            <person name="Dunning Hotopp J.C."/>
            <person name="Hu F.Z."/>
            <person name="Riley D.R."/>
            <person name="Covacci A."/>
            <person name="Mitchell T.J."/>
            <person name="Bentley S.D."/>
            <person name="Kilian M."/>
            <person name="Ehrlich G.D."/>
            <person name="Rappuoli R."/>
            <person name="Moxon E.R."/>
            <person name="Masignani V."/>
        </authorList>
    </citation>
    <scope>NUCLEOTIDE SEQUENCE [LARGE SCALE GENOMIC DNA]</scope>
    <source>
        <strain>Hungary19A-6</strain>
    </source>
</reference>
<comment type="function">
    <text evidence="1">Catalyzes the last two sequential reactions in the de novo biosynthetic pathway for UDP-N-acetylglucosamine (UDP-GlcNAc). The C-terminal domain catalyzes the transfer of acetyl group from acetyl coenzyme A to glucosamine-1-phosphate (GlcN-1-P) to produce N-acetylglucosamine-1-phosphate (GlcNAc-1-P), which is converted into UDP-GlcNAc by the transfer of uridine 5-monophosphate (from uridine 5-triphosphate), a reaction catalyzed by the N-terminal domain.</text>
</comment>
<comment type="catalytic activity">
    <reaction evidence="1">
        <text>alpha-D-glucosamine 1-phosphate + acetyl-CoA = N-acetyl-alpha-D-glucosamine 1-phosphate + CoA + H(+)</text>
        <dbReference type="Rhea" id="RHEA:13725"/>
        <dbReference type="ChEBI" id="CHEBI:15378"/>
        <dbReference type="ChEBI" id="CHEBI:57287"/>
        <dbReference type="ChEBI" id="CHEBI:57288"/>
        <dbReference type="ChEBI" id="CHEBI:57776"/>
        <dbReference type="ChEBI" id="CHEBI:58516"/>
        <dbReference type="EC" id="2.3.1.157"/>
    </reaction>
</comment>
<comment type="catalytic activity">
    <reaction evidence="1">
        <text>N-acetyl-alpha-D-glucosamine 1-phosphate + UTP + H(+) = UDP-N-acetyl-alpha-D-glucosamine + diphosphate</text>
        <dbReference type="Rhea" id="RHEA:13509"/>
        <dbReference type="ChEBI" id="CHEBI:15378"/>
        <dbReference type="ChEBI" id="CHEBI:33019"/>
        <dbReference type="ChEBI" id="CHEBI:46398"/>
        <dbReference type="ChEBI" id="CHEBI:57705"/>
        <dbReference type="ChEBI" id="CHEBI:57776"/>
        <dbReference type="EC" id="2.7.7.23"/>
    </reaction>
</comment>
<comment type="cofactor">
    <cofactor evidence="1">
        <name>Mg(2+)</name>
        <dbReference type="ChEBI" id="CHEBI:18420"/>
    </cofactor>
    <text evidence="1">Binds 1 Mg(2+) ion per subunit.</text>
</comment>
<comment type="pathway">
    <text evidence="1">Nucleotide-sugar biosynthesis; UDP-N-acetyl-alpha-D-glucosamine biosynthesis; N-acetyl-alpha-D-glucosamine 1-phosphate from alpha-D-glucosamine 6-phosphate (route II): step 2/2.</text>
</comment>
<comment type="pathway">
    <text evidence="1">Nucleotide-sugar biosynthesis; UDP-N-acetyl-alpha-D-glucosamine biosynthesis; UDP-N-acetyl-alpha-D-glucosamine from N-acetyl-alpha-D-glucosamine 1-phosphate: step 1/1.</text>
</comment>
<comment type="pathway">
    <text evidence="1">Bacterial outer membrane biogenesis; LPS lipid A biosynthesis.</text>
</comment>
<comment type="subunit">
    <text evidence="1">Homotrimer.</text>
</comment>
<comment type="subcellular location">
    <subcellularLocation>
        <location evidence="1">Cytoplasm</location>
    </subcellularLocation>
</comment>
<comment type="similarity">
    <text evidence="1">In the N-terminal section; belongs to the N-acetylglucosamine-1-phosphate uridyltransferase family.</text>
</comment>
<comment type="similarity">
    <text evidence="1">In the C-terminal section; belongs to the transferase hexapeptide repeat family.</text>
</comment>
<feature type="chain" id="PRO_1000186498" description="Bifunctional protein GlmU">
    <location>
        <begin position="1"/>
        <end position="459"/>
    </location>
</feature>
<feature type="region of interest" description="Pyrophosphorylase" evidence="1">
    <location>
        <begin position="1"/>
        <end position="229"/>
    </location>
</feature>
<feature type="region of interest" description="Linker" evidence="1">
    <location>
        <begin position="230"/>
        <end position="250"/>
    </location>
</feature>
<feature type="region of interest" description="N-acetyltransferase" evidence="1">
    <location>
        <begin position="251"/>
        <end position="459"/>
    </location>
</feature>
<feature type="active site" description="Proton acceptor" evidence="1">
    <location>
        <position position="362"/>
    </location>
</feature>
<feature type="binding site" evidence="1">
    <location>
        <begin position="8"/>
        <end position="11"/>
    </location>
    <ligand>
        <name>UDP-N-acetyl-alpha-D-glucosamine</name>
        <dbReference type="ChEBI" id="CHEBI:57705"/>
    </ligand>
</feature>
<feature type="binding site" evidence="1">
    <location>
        <position position="22"/>
    </location>
    <ligand>
        <name>UDP-N-acetyl-alpha-D-glucosamine</name>
        <dbReference type="ChEBI" id="CHEBI:57705"/>
    </ligand>
</feature>
<feature type="binding site" evidence="1">
    <location>
        <position position="72"/>
    </location>
    <ligand>
        <name>UDP-N-acetyl-alpha-D-glucosamine</name>
        <dbReference type="ChEBI" id="CHEBI:57705"/>
    </ligand>
</feature>
<feature type="binding site" evidence="1">
    <location>
        <begin position="77"/>
        <end position="78"/>
    </location>
    <ligand>
        <name>UDP-N-acetyl-alpha-D-glucosamine</name>
        <dbReference type="ChEBI" id="CHEBI:57705"/>
    </ligand>
</feature>
<feature type="binding site" evidence="1">
    <location>
        <position position="102"/>
    </location>
    <ligand>
        <name>Mg(2+)</name>
        <dbReference type="ChEBI" id="CHEBI:18420"/>
    </ligand>
</feature>
<feature type="binding site" evidence="1">
    <location>
        <position position="139"/>
    </location>
    <ligand>
        <name>UDP-N-acetyl-alpha-D-glucosamine</name>
        <dbReference type="ChEBI" id="CHEBI:57705"/>
    </ligand>
</feature>
<feature type="binding site" evidence="1">
    <location>
        <position position="154"/>
    </location>
    <ligand>
        <name>UDP-N-acetyl-alpha-D-glucosamine</name>
        <dbReference type="ChEBI" id="CHEBI:57705"/>
    </ligand>
</feature>
<feature type="binding site" evidence="1">
    <location>
        <position position="169"/>
    </location>
    <ligand>
        <name>UDP-N-acetyl-alpha-D-glucosamine</name>
        <dbReference type="ChEBI" id="CHEBI:57705"/>
    </ligand>
</feature>
<feature type="binding site" evidence="1">
    <location>
        <position position="227"/>
    </location>
    <ligand>
        <name>Mg(2+)</name>
        <dbReference type="ChEBI" id="CHEBI:18420"/>
    </ligand>
</feature>
<feature type="binding site" evidence="1">
    <location>
        <position position="227"/>
    </location>
    <ligand>
        <name>UDP-N-acetyl-alpha-D-glucosamine</name>
        <dbReference type="ChEBI" id="CHEBI:57705"/>
    </ligand>
</feature>
<feature type="binding site" evidence="1">
    <location>
        <position position="332"/>
    </location>
    <ligand>
        <name>UDP-N-acetyl-alpha-D-glucosamine</name>
        <dbReference type="ChEBI" id="CHEBI:57705"/>
    </ligand>
</feature>
<feature type="binding site" evidence="1">
    <location>
        <position position="350"/>
    </location>
    <ligand>
        <name>UDP-N-acetyl-alpha-D-glucosamine</name>
        <dbReference type="ChEBI" id="CHEBI:57705"/>
    </ligand>
</feature>
<feature type="binding site" evidence="1">
    <location>
        <position position="365"/>
    </location>
    <ligand>
        <name>UDP-N-acetyl-alpha-D-glucosamine</name>
        <dbReference type="ChEBI" id="CHEBI:57705"/>
    </ligand>
</feature>
<feature type="binding site" evidence="1">
    <location>
        <position position="376"/>
    </location>
    <ligand>
        <name>UDP-N-acetyl-alpha-D-glucosamine</name>
        <dbReference type="ChEBI" id="CHEBI:57705"/>
    </ligand>
</feature>
<feature type="binding site" evidence="1">
    <location>
        <position position="379"/>
    </location>
    <ligand>
        <name>acetyl-CoA</name>
        <dbReference type="ChEBI" id="CHEBI:57288"/>
    </ligand>
</feature>
<feature type="binding site" evidence="1">
    <location>
        <begin position="385"/>
        <end position="386"/>
    </location>
    <ligand>
        <name>acetyl-CoA</name>
        <dbReference type="ChEBI" id="CHEBI:57288"/>
    </ligand>
</feature>
<feature type="binding site" evidence="1">
    <location>
        <position position="404"/>
    </location>
    <ligand>
        <name>acetyl-CoA</name>
        <dbReference type="ChEBI" id="CHEBI:57288"/>
    </ligand>
</feature>
<feature type="binding site" evidence="1">
    <location>
        <position position="422"/>
    </location>
    <ligand>
        <name>acetyl-CoA</name>
        <dbReference type="ChEBI" id="CHEBI:57288"/>
    </ligand>
</feature>
<feature type="binding site" evidence="1">
    <location>
        <position position="439"/>
    </location>
    <ligand>
        <name>acetyl-CoA</name>
        <dbReference type="ChEBI" id="CHEBI:57288"/>
    </ligand>
</feature>
<organism>
    <name type="scientific">Streptococcus pneumoniae (strain Hungary19A-6)</name>
    <dbReference type="NCBI Taxonomy" id="487214"/>
    <lineage>
        <taxon>Bacteria</taxon>
        <taxon>Bacillati</taxon>
        <taxon>Bacillota</taxon>
        <taxon>Bacilli</taxon>
        <taxon>Lactobacillales</taxon>
        <taxon>Streptococcaceae</taxon>
        <taxon>Streptococcus</taxon>
    </lineage>
</organism>
<proteinExistence type="inferred from homology"/>
<protein>
    <recommendedName>
        <fullName evidence="1">Bifunctional protein GlmU</fullName>
    </recommendedName>
    <domain>
        <recommendedName>
            <fullName evidence="1">UDP-N-acetylglucosamine pyrophosphorylase</fullName>
            <ecNumber evidence="1">2.7.7.23</ecNumber>
        </recommendedName>
        <alternativeName>
            <fullName evidence="1">N-acetylglucosamine-1-phosphate uridyltransferase</fullName>
        </alternativeName>
    </domain>
    <domain>
        <recommendedName>
            <fullName evidence="1">Glucosamine-1-phosphate N-acetyltransferase</fullName>
            <ecNumber evidence="1">2.3.1.157</ecNumber>
        </recommendedName>
    </domain>
</protein>
<evidence type="ECO:0000255" key="1">
    <source>
        <dbReference type="HAMAP-Rule" id="MF_01631"/>
    </source>
</evidence>